<organism>
    <name type="scientific">Pongo abelii</name>
    <name type="common">Sumatran orangutan</name>
    <name type="synonym">Pongo pygmaeus abelii</name>
    <dbReference type="NCBI Taxonomy" id="9601"/>
    <lineage>
        <taxon>Eukaryota</taxon>
        <taxon>Metazoa</taxon>
        <taxon>Chordata</taxon>
        <taxon>Craniata</taxon>
        <taxon>Vertebrata</taxon>
        <taxon>Euteleostomi</taxon>
        <taxon>Mammalia</taxon>
        <taxon>Eutheria</taxon>
        <taxon>Euarchontoglires</taxon>
        <taxon>Primates</taxon>
        <taxon>Haplorrhini</taxon>
        <taxon>Catarrhini</taxon>
        <taxon>Hominidae</taxon>
        <taxon>Pongo</taxon>
    </lineage>
</organism>
<name>ZDHC9_PONAB</name>
<sequence>MSVMVVRKKVTRKWEKLPGRNTFCCDGRVMMARQKGIFYLTLFLILGTCTLFFAFECRYLAVQQSPAIPVFAAMLFLFSMATLLRASFSDPGVIPRALPDEAAFIEMEIEATNGAVPQGQRPPPRIKNSQINNQIVKLKYCYTCKIFRPPRASHCSICDNCVERFDHHCPWVGNCVGKRNYRYFYLFILSLSLLTIYVFAFNIVYVALKSLKIGFLETLKETPGTVLEVLICFFTLWSVVGLTGFHTFLVALNQTTNEDIKGSWTGKNRVQNPYSHGNIVKNCCEVLCGPLPPSVLDRRGILPLEESGSRPPSTQETSSSLLPQSPAPTEHLNSNEMPDDSSTPEEMPPPEPPEPPQEAAEAEK</sequence>
<protein>
    <recommendedName>
        <fullName>Palmitoyltransferase ZDHHC9</fullName>
        <ecNumber evidence="2">2.3.1.225</ecNumber>
    </recommendedName>
    <alternativeName>
        <fullName>Zinc finger DHHC domain-containing protein 9</fullName>
        <shortName>DHHC-9</shortName>
        <shortName>DHHC9</shortName>
    </alternativeName>
</protein>
<evidence type="ECO:0000250" key="1">
    <source>
        <dbReference type="UniProtKB" id="Q8IUH5"/>
    </source>
</evidence>
<evidence type="ECO:0000250" key="2">
    <source>
        <dbReference type="UniProtKB" id="Q9Y397"/>
    </source>
</evidence>
<evidence type="ECO:0000255" key="3"/>
<evidence type="ECO:0000255" key="4">
    <source>
        <dbReference type="PROSITE-ProRule" id="PRU00067"/>
    </source>
</evidence>
<evidence type="ECO:0000256" key="5">
    <source>
        <dbReference type="SAM" id="MobiDB-lite"/>
    </source>
</evidence>
<evidence type="ECO:0000305" key="6"/>
<accession>Q5R5J8</accession>
<gene>
    <name type="primary">ZDHHC9</name>
</gene>
<reference key="1">
    <citation type="submission" date="2004-11" db="EMBL/GenBank/DDBJ databases">
        <authorList>
            <consortium name="The German cDNA consortium"/>
        </authorList>
    </citation>
    <scope>NUCLEOTIDE SEQUENCE [LARGE SCALE MRNA]</scope>
    <source>
        <tissue>Kidney</tissue>
    </source>
</reference>
<dbReference type="EC" id="2.3.1.225" evidence="2"/>
<dbReference type="EMBL" id="CR860860">
    <property type="protein sequence ID" value="CAH92968.1"/>
    <property type="molecule type" value="mRNA"/>
</dbReference>
<dbReference type="RefSeq" id="NP_001126752.1">
    <property type="nucleotide sequence ID" value="NM_001133280.1"/>
</dbReference>
<dbReference type="SMR" id="Q5R5J8"/>
<dbReference type="STRING" id="9601.ENSPPYP00000023183"/>
<dbReference type="GeneID" id="100173754"/>
<dbReference type="KEGG" id="pon:100173754"/>
<dbReference type="CTD" id="51114"/>
<dbReference type="eggNOG" id="KOG1311">
    <property type="taxonomic scope" value="Eukaryota"/>
</dbReference>
<dbReference type="InParanoid" id="Q5R5J8"/>
<dbReference type="OrthoDB" id="4096362at2759"/>
<dbReference type="Proteomes" id="UP000001595">
    <property type="component" value="Unplaced"/>
</dbReference>
<dbReference type="GO" id="GO:0005783">
    <property type="term" value="C:endoplasmic reticulum"/>
    <property type="evidence" value="ECO:0000250"/>
    <property type="project" value="CAFA"/>
</dbReference>
<dbReference type="GO" id="GO:0005789">
    <property type="term" value="C:endoplasmic reticulum membrane"/>
    <property type="evidence" value="ECO:0007669"/>
    <property type="project" value="UniProtKB-SubCell"/>
</dbReference>
<dbReference type="GO" id="GO:0005794">
    <property type="term" value="C:Golgi apparatus"/>
    <property type="evidence" value="ECO:0000250"/>
    <property type="project" value="UniProtKB"/>
</dbReference>
<dbReference type="GO" id="GO:0000139">
    <property type="term" value="C:Golgi membrane"/>
    <property type="evidence" value="ECO:0000250"/>
    <property type="project" value="CAFA"/>
</dbReference>
<dbReference type="GO" id="GO:0002178">
    <property type="term" value="C:palmitoyltransferase complex"/>
    <property type="evidence" value="ECO:0000250"/>
    <property type="project" value="CAFA"/>
</dbReference>
<dbReference type="GO" id="GO:0019706">
    <property type="term" value="F:protein-cysteine S-palmitoyltransferase activity"/>
    <property type="evidence" value="ECO:0000250"/>
    <property type="project" value="UniProtKB"/>
</dbReference>
<dbReference type="GO" id="GO:0043849">
    <property type="term" value="F:Ras palmitoyltransferase activity"/>
    <property type="evidence" value="ECO:0000250"/>
    <property type="project" value="CAFA"/>
</dbReference>
<dbReference type="GO" id="GO:0018230">
    <property type="term" value="P:peptidyl-L-cysteine S-palmitoylation"/>
    <property type="evidence" value="ECO:0000250"/>
    <property type="project" value="CAFA"/>
</dbReference>
<dbReference type="GO" id="GO:0140639">
    <property type="term" value="P:positive regulation of pyroptotic inflammatory response"/>
    <property type="evidence" value="ECO:0000250"/>
    <property type="project" value="UniProtKB"/>
</dbReference>
<dbReference type="GO" id="GO:0006612">
    <property type="term" value="P:protein targeting to membrane"/>
    <property type="evidence" value="ECO:0007669"/>
    <property type="project" value="TreeGrafter"/>
</dbReference>
<dbReference type="InterPro" id="IPR001594">
    <property type="entry name" value="Palmitoyltrfase_DHHC"/>
</dbReference>
<dbReference type="InterPro" id="IPR039859">
    <property type="entry name" value="PFA4/ZDH16/20/ERF2-like"/>
</dbReference>
<dbReference type="PANTHER" id="PTHR22883:SF71">
    <property type="entry name" value="PALMITOYLTRANSFERASE ZDHHC9"/>
    <property type="match status" value="1"/>
</dbReference>
<dbReference type="PANTHER" id="PTHR22883">
    <property type="entry name" value="ZINC FINGER DHHC DOMAIN CONTAINING PROTEIN"/>
    <property type="match status" value="1"/>
</dbReference>
<dbReference type="Pfam" id="PF01529">
    <property type="entry name" value="DHHC"/>
    <property type="match status" value="1"/>
</dbReference>
<dbReference type="PROSITE" id="PS50216">
    <property type="entry name" value="DHHC"/>
    <property type="match status" value="1"/>
</dbReference>
<feature type="chain" id="PRO_0000212882" description="Palmitoyltransferase ZDHHC9">
    <location>
        <begin position="1"/>
        <end position="364"/>
    </location>
</feature>
<feature type="topological domain" description="Cytoplasmic" evidence="3">
    <location>
        <begin position="1"/>
        <end position="35"/>
    </location>
</feature>
<feature type="transmembrane region" description="Helical" evidence="3">
    <location>
        <begin position="36"/>
        <end position="56"/>
    </location>
</feature>
<feature type="topological domain" description="Lumenal" evidence="3">
    <location>
        <begin position="57"/>
        <end position="63"/>
    </location>
</feature>
<feature type="transmembrane region" description="Helical" evidence="3">
    <location>
        <begin position="64"/>
        <end position="84"/>
    </location>
</feature>
<feature type="topological domain" description="Cytoplasmic" evidence="3">
    <location>
        <begin position="85"/>
        <end position="183"/>
    </location>
</feature>
<feature type="transmembrane region" description="Helical" evidence="3">
    <location>
        <begin position="184"/>
        <end position="204"/>
    </location>
</feature>
<feature type="topological domain" description="Lumenal" evidence="3">
    <location>
        <begin position="205"/>
        <end position="228"/>
    </location>
</feature>
<feature type="transmembrane region" description="Helical" evidence="3">
    <location>
        <begin position="229"/>
        <end position="249"/>
    </location>
</feature>
<feature type="topological domain" description="Cytoplasmic" evidence="3">
    <location>
        <begin position="250"/>
        <end position="364"/>
    </location>
</feature>
<feature type="domain" description="DHHC" evidence="4">
    <location>
        <begin position="139"/>
        <end position="189"/>
    </location>
</feature>
<feature type="region of interest" description="Disordered" evidence="5">
    <location>
        <begin position="303"/>
        <end position="364"/>
    </location>
</feature>
<feature type="compositionally biased region" description="Polar residues" evidence="5">
    <location>
        <begin position="310"/>
        <end position="323"/>
    </location>
</feature>
<feature type="compositionally biased region" description="Pro residues" evidence="5">
    <location>
        <begin position="346"/>
        <end position="356"/>
    </location>
</feature>
<feature type="active site" description="S-palmitoyl cysteine intermediate" evidence="2">
    <location>
        <position position="169"/>
    </location>
</feature>
<comment type="function">
    <text evidence="2">Palmitoyltransferase that catalyzes the addition of palmitate onto various protein substrates, such as ADRB2, GSDMD, HRAS, NRAS and CGAS. The ZDHHC9-GOLGA7 complex is a palmitoyltransferase specific for HRAS and NRAS. May have a palmitoyltransferase activity toward the beta-2 adrenergic receptor/ADRB2 and therefore regulate G protein-coupled receptor signaling. Acts as a regulator of innate immunity by catalyzing palmitoylation of CGAS, thereby promoting CGAS homodimerization and cyclic GMP-AMP synthase activity. Activates pyroptosis by catalyzing palmitoylation of gasdermin-D (GSDMD), thereby promoting membrane translocation and pore formation of GSDMD.</text>
</comment>
<comment type="catalytic activity">
    <reaction evidence="2">
        <text>L-cysteinyl-[protein] + hexadecanoyl-CoA = S-hexadecanoyl-L-cysteinyl-[protein] + CoA</text>
        <dbReference type="Rhea" id="RHEA:36683"/>
        <dbReference type="Rhea" id="RHEA-COMP:10131"/>
        <dbReference type="Rhea" id="RHEA-COMP:11032"/>
        <dbReference type="ChEBI" id="CHEBI:29950"/>
        <dbReference type="ChEBI" id="CHEBI:57287"/>
        <dbReference type="ChEBI" id="CHEBI:57379"/>
        <dbReference type="ChEBI" id="CHEBI:74151"/>
        <dbReference type="EC" id="2.3.1.225"/>
    </reaction>
    <physiologicalReaction direction="left-to-right" evidence="2">
        <dbReference type="Rhea" id="RHEA:36684"/>
    </physiologicalReaction>
</comment>
<comment type="subunit">
    <text evidence="2">Interacts with GOLGA7.</text>
</comment>
<comment type="subcellular location">
    <subcellularLocation>
        <location evidence="2">Endoplasmic reticulum membrane</location>
        <topology evidence="3">Multi-pass membrane protein</topology>
    </subcellularLocation>
    <subcellularLocation>
        <location evidence="2">Golgi apparatus membrane</location>
        <topology evidence="3">Multi-pass membrane protein</topology>
    </subcellularLocation>
</comment>
<comment type="domain">
    <text evidence="1">The DHHC domain is required for palmitoyltransferase activity.</text>
</comment>
<comment type="similarity">
    <text evidence="6">Belongs to the DHHC palmitoyltransferase family. ERF2/ZDHHC9 subfamily.</text>
</comment>
<proteinExistence type="evidence at transcript level"/>
<keyword id="KW-0012">Acyltransferase</keyword>
<keyword id="KW-0256">Endoplasmic reticulum</keyword>
<keyword id="KW-0333">Golgi apparatus</keyword>
<keyword id="KW-0449">Lipoprotein</keyword>
<keyword id="KW-0472">Membrane</keyword>
<keyword id="KW-0564">Palmitate</keyword>
<keyword id="KW-1185">Reference proteome</keyword>
<keyword id="KW-0808">Transferase</keyword>
<keyword id="KW-0812">Transmembrane</keyword>
<keyword id="KW-1133">Transmembrane helix</keyword>